<proteinExistence type="inferred from homology"/>
<organism>
    <name type="scientific">Shewanella sp. (strain MR-7)</name>
    <dbReference type="NCBI Taxonomy" id="60481"/>
    <lineage>
        <taxon>Bacteria</taxon>
        <taxon>Pseudomonadati</taxon>
        <taxon>Pseudomonadota</taxon>
        <taxon>Gammaproteobacteria</taxon>
        <taxon>Alteromonadales</taxon>
        <taxon>Shewanellaceae</taxon>
        <taxon>Shewanella</taxon>
    </lineage>
</organism>
<protein>
    <recommendedName>
        <fullName evidence="1">Ion-translocating oxidoreductase complex subunit A</fullName>
        <ecNumber evidence="1">7.-.-.-</ecNumber>
    </recommendedName>
    <alternativeName>
        <fullName evidence="1">Rnf electron transport complex subunit A</fullName>
    </alternativeName>
</protein>
<keyword id="KW-0997">Cell inner membrane</keyword>
<keyword id="KW-1003">Cell membrane</keyword>
<keyword id="KW-0249">Electron transport</keyword>
<keyword id="KW-0472">Membrane</keyword>
<keyword id="KW-1278">Translocase</keyword>
<keyword id="KW-0812">Transmembrane</keyword>
<keyword id="KW-1133">Transmembrane helix</keyword>
<keyword id="KW-0813">Transport</keyword>
<name>RNFA_SHESR</name>
<comment type="function">
    <text evidence="1">Part of a membrane-bound complex that couples electron transfer with translocation of ions across the membrane.</text>
</comment>
<comment type="subunit">
    <text evidence="1">The complex is composed of six subunits: RnfA, RnfB, RnfC, RnfD, RnfE and RnfG.</text>
</comment>
<comment type="subcellular location">
    <subcellularLocation>
        <location evidence="1">Cell inner membrane</location>
        <topology evidence="1">Multi-pass membrane protein</topology>
    </subcellularLocation>
</comment>
<comment type="similarity">
    <text evidence="1">Belongs to the NqrDE/RnfAE family.</text>
</comment>
<feature type="chain" id="PRO_1000013554" description="Ion-translocating oxidoreductase complex subunit A">
    <location>
        <begin position="1"/>
        <end position="192"/>
    </location>
</feature>
<feature type="transmembrane region" description="Helical" evidence="1">
    <location>
        <begin position="5"/>
        <end position="25"/>
    </location>
</feature>
<feature type="transmembrane region" description="Helical" evidence="1">
    <location>
        <begin position="39"/>
        <end position="59"/>
    </location>
</feature>
<feature type="transmembrane region" description="Helical" evidence="1">
    <location>
        <begin position="65"/>
        <end position="85"/>
    </location>
</feature>
<feature type="transmembrane region" description="Helical" evidence="1">
    <location>
        <begin position="102"/>
        <end position="122"/>
    </location>
</feature>
<feature type="transmembrane region" description="Helical" evidence="1">
    <location>
        <begin position="134"/>
        <end position="154"/>
    </location>
</feature>
<feature type="transmembrane region" description="Helical" evidence="1">
    <location>
        <begin position="171"/>
        <end position="191"/>
    </location>
</feature>
<sequence>MSEYLLLLISTVLVNNFVLVKFLGLCPFMGVSSKLESAIGMSMATTFVLTLASILSYLVNQYLLLPFDLGYLRTMSFILVIAVVVQFTEMVVQKTSAALHRALGIYLPLITTNCAVLGVALLNVNEKHDFIQSAIYGFGAAVGFSLVLILFSAMRERLAAADVPMPFKGGAIAMITAGLMSLAFMGFTGLVK</sequence>
<evidence type="ECO:0000255" key="1">
    <source>
        <dbReference type="HAMAP-Rule" id="MF_00459"/>
    </source>
</evidence>
<dbReference type="EC" id="7.-.-.-" evidence="1"/>
<dbReference type="EMBL" id="CP000444">
    <property type="protein sequence ID" value="ABI42900.1"/>
    <property type="molecule type" value="Genomic_DNA"/>
</dbReference>
<dbReference type="SMR" id="Q0HVF5"/>
<dbReference type="KEGG" id="shm:Shewmr7_1911"/>
<dbReference type="HOGENOM" id="CLU_095255_1_0_6"/>
<dbReference type="GO" id="GO:0005886">
    <property type="term" value="C:plasma membrane"/>
    <property type="evidence" value="ECO:0007669"/>
    <property type="project" value="UniProtKB-SubCell"/>
</dbReference>
<dbReference type="GO" id="GO:0022900">
    <property type="term" value="P:electron transport chain"/>
    <property type="evidence" value="ECO:0007669"/>
    <property type="project" value="UniProtKB-UniRule"/>
</dbReference>
<dbReference type="HAMAP" id="MF_00459">
    <property type="entry name" value="RsxA_RnfA"/>
    <property type="match status" value="1"/>
</dbReference>
<dbReference type="InterPro" id="IPR011293">
    <property type="entry name" value="Ion_transpt_RnfA/RsxA"/>
</dbReference>
<dbReference type="InterPro" id="IPR003667">
    <property type="entry name" value="NqrDE/RnfAE"/>
</dbReference>
<dbReference type="InterPro" id="IPR050133">
    <property type="entry name" value="NqrDE/RnfAE_oxidrdctase"/>
</dbReference>
<dbReference type="NCBIfam" id="NF003481">
    <property type="entry name" value="PRK05151.1"/>
    <property type="match status" value="1"/>
</dbReference>
<dbReference type="NCBIfam" id="TIGR01943">
    <property type="entry name" value="rnfA"/>
    <property type="match status" value="1"/>
</dbReference>
<dbReference type="PANTHER" id="PTHR30335">
    <property type="entry name" value="INTEGRAL MEMBRANE PROTEIN OF SOXR-REDUCING COMPLEX"/>
    <property type="match status" value="1"/>
</dbReference>
<dbReference type="PANTHER" id="PTHR30335:SF0">
    <property type="entry name" value="ION-TRANSLOCATING OXIDOREDUCTASE COMPLEX SUBUNIT A"/>
    <property type="match status" value="1"/>
</dbReference>
<dbReference type="Pfam" id="PF02508">
    <property type="entry name" value="Rnf-Nqr"/>
    <property type="match status" value="1"/>
</dbReference>
<dbReference type="PIRSF" id="PIRSF006102">
    <property type="entry name" value="NQR_DE"/>
    <property type="match status" value="1"/>
</dbReference>
<gene>
    <name evidence="1" type="primary">rnfA</name>
    <name type="ordered locus">Shewmr7_1911</name>
</gene>
<reference key="1">
    <citation type="submission" date="2006-08" db="EMBL/GenBank/DDBJ databases">
        <title>Complete sequence of chromosome 1 of Shewanella sp. MR-7.</title>
        <authorList>
            <person name="Copeland A."/>
            <person name="Lucas S."/>
            <person name="Lapidus A."/>
            <person name="Barry K."/>
            <person name="Detter J.C."/>
            <person name="Glavina del Rio T."/>
            <person name="Hammon N."/>
            <person name="Israni S."/>
            <person name="Dalin E."/>
            <person name="Tice H."/>
            <person name="Pitluck S."/>
            <person name="Kiss H."/>
            <person name="Brettin T."/>
            <person name="Bruce D."/>
            <person name="Han C."/>
            <person name="Tapia R."/>
            <person name="Gilna P."/>
            <person name="Schmutz J."/>
            <person name="Larimer F."/>
            <person name="Land M."/>
            <person name="Hauser L."/>
            <person name="Kyrpides N."/>
            <person name="Mikhailova N."/>
            <person name="Nealson K."/>
            <person name="Konstantinidis K."/>
            <person name="Klappenbach J."/>
            <person name="Tiedje J."/>
            <person name="Richardson P."/>
        </authorList>
    </citation>
    <scope>NUCLEOTIDE SEQUENCE [LARGE SCALE GENOMIC DNA]</scope>
    <source>
        <strain>MR-7</strain>
    </source>
</reference>
<accession>Q0HVF5</accession>